<organism>
    <name type="scientific">Aspergillus fumigatus (strain ATCC MYA-4609 / CBS 101355 / FGSC A1100 / Af293)</name>
    <name type="common">Neosartorya fumigata</name>
    <dbReference type="NCBI Taxonomy" id="330879"/>
    <lineage>
        <taxon>Eukaryota</taxon>
        <taxon>Fungi</taxon>
        <taxon>Dikarya</taxon>
        <taxon>Ascomycota</taxon>
        <taxon>Pezizomycotina</taxon>
        <taxon>Eurotiomycetes</taxon>
        <taxon>Eurotiomycetidae</taxon>
        <taxon>Eurotiales</taxon>
        <taxon>Aspergillaceae</taxon>
        <taxon>Aspergillus</taxon>
        <taxon>Aspergillus subgen. Fumigati</taxon>
    </lineage>
</organism>
<dbReference type="EMBL" id="AAHF01000003">
    <property type="protein sequence ID" value="EAL91446.1"/>
    <property type="molecule type" value="Genomic_DNA"/>
</dbReference>
<dbReference type="RefSeq" id="XP_753484.1">
    <property type="nucleotide sequence ID" value="XM_748391.1"/>
</dbReference>
<dbReference type="SMR" id="Q4WVD0"/>
<dbReference type="FunCoup" id="Q4WVD0">
    <property type="interactions" value="555"/>
</dbReference>
<dbReference type="STRING" id="330879.Q4WVD0"/>
<dbReference type="EnsemblFungi" id="EAL91446">
    <property type="protein sequence ID" value="EAL91446"/>
    <property type="gene ID" value="AFUA_5G11660"/>
</dbReference>
<dbReference type="GeneID" id="3511202"/>
<dbReference type="KEGG" id="afm:AFUA_5G11660"/>
<dbReference type="eggNOG" id="KOG2110">
    <property type="taxonomic scope" value="Eukaryota"/>
</dbReference>
<dbReference type="HOGENOM" id="CLU_025895_5_0_1"/>
<dbReference type="InParanoid" id="Q4WVD0"/>
<dbReference type="OMA" id="NIAILEM"/>
<dbReference type="OrthoDB" id="1667587at2759"/>
<dbReference type="Proteomes" id="UP000002530">
    <property type="component" value="Chromosome 5"/>
</dbReference>
<dbReference type="GO" id="GO:0005829">
    <property type="term" value="C:cytosol"/>
    <property type="evidence" value="ECO:0000318"/>
    <property type="project" value="GO_Central"/>
</dbReference>
<dbReference type="GO" id="GO:0010008">
    <property type="term" value="C:endosome membrane"/>
    <property type="evidence" value="ECO:0007669"/>
    <property type="project" value="UniProtKB-SubCell"/>
</dbReference>
<dbReference type="GO" id="GO:0000329">
    <property type="term" value="C:fungal-type vacuole membrane"/>
    <property type="evidence" value="ECO:0000318"/>
    <property type="project" value="GO_Central"/>
</dbReference>
<dbReference type="GO" id="GO:0034045">
    <property type="term" value="C:phagophore assembly site membrane"/>
    <property type="evidence" value="ECO:0000318"/>
    <property type="project" value="GO_Central"/>
</dbReference>
<dbReference type="GO" id="GO:0080025">
    <property type="term" value="F:phosphatidylinositol-3,5-bisphosphate binding"/>
    <property type="evidence" value="ECO:0000318"/>
    <property type="project" value="GO_Central"/>
</dbReference>
<dbReference type="GO" id="GO:0032266">
    <property type="term" value="F:phosphatidylinositol-3-phosphate binding"/>
    <property type="evidence" value="ECO:0000318"/>
    <property type="project" value="GO_Central"/>
</dbReference>
<dbReference type="GO" id="GO:0030674">
    <property type="term" value="F:protein-macromolecule adaptor activity"/>
    <property type="evidence" value="ECO:0000318"/>
    <property type="project" value="GO_Central"/>
</dbReference>
<dbReference type="GO" id="GO:0000422">
    <property type="term" value="P:autophagy of mitochondrion"/>
    <property type="evidence" value="ECO:0000318"/>
    <property type="project" value="GO_Central"/>
</dbReference>
<dbReference type="GO" id="GO:0061723">
    <property type="term" value="P:glycophagy"/>
    <property type="evidence" value="ECO:0000318"/>
    <property type="project" value="GO_Central"/>
</dbReference>
<dbReference type="GO" id="GO:0044804">
    <property type="term" value="P:nucleophagy"/>
    <property type="evidence" value="ECO:0000318"/>
    <property type="project" value="GO_Central"/>
</dbReference>
<dbReference type="GO" id="GO:0000425">
    <property type="term" value="P:pexophagy"/>
    <property type="evidence" value="ECO:0000318"/>
    <property type="project" value="GO_Central"/>
</dbReference>
<dbReference type="GO" id="GO:0034497">
    <property type="term" value="P:protein localization to phagophore assembly site"/>
    <property type="evidence" value="ECO:0000318"/>
    <property type="project" value="GO_Central"/>
</dbReference>
<dbReference type="GO" id="GO:0015031">
    <property type="term" value="P:protein transport"/>
    <property type="evidence" value="ECO:0007669"/>
    <property type="project" value="UniProtKB-KW"/>
</dbReference>
<dbReference type="FunFam" id="2.130.10.10:FF:000965">
    <property type="entry name" value="Autophagy-like protein 18 Atg18"/>
    <property type="match status" value="1"/>
</dbReference>
<dbReference type="Gene3D" id="2.130.10.10">
    <property type="entry name" value="YVTN repeat-like/Quinoprotein amine dehydrogenase"/>
    <property type="match status" value="1"/>
</dbReference>
<dbReference type="InterPro" id="IPR048720">
    <property type="entry name" value="PROPPIN"/>
</dbReference>
<dbReference type="InterPro" id="IPR015943">
    <property type="entry name" value="WD40/YVTN_repeat-like_dom_sf"/>
</dbReference>
<dbReference type="InterPro" id="IPR036322">
    <property type="entry name" value="WD40_repeat_dom_sf"/>
</dbReference>
<dbReference type="InterPro" id="IPR001680">
    <property type="entry name" value="WD40_rpt"/>
</dbReference>
<dbReference type="PANTHER" id="PTHR11227">
    <property type="entry name" value="WD-REPEAT PROTEIN INTERACTING WITH PHOSPHOINOSIDES WIPI -RELATED"/>
    <property type="match status" value="1"/>
</dbReference>
<dbReference type="Pfam" id="PF21032">
    <property type="entry name" value="PROPPIN"/>
    <property type="match status" value="2"/>
</dbReference>
<dbReference type="SMART" id="SM00320">
    <property type="entry name" value="WD40"/>
    <property type="match status" value="3"/>
</dbReference>
<dbReference type="SUPFAM" id="SSF50978">
    <property type="entry name" value="WD40 repeat-like"/>
    <property type="match status" value="1"/>
</dbReference>
<protein>
    <recommendedName>
        <fullName>Autophagy-related protein 18</fullName>
    </recommendedName>
</protein>
<accession>Q4WVD0</accession>
<gene>
    <name type="primary">atg18</name>
    <name type="ORF">AFUA_5G11660</name>
</gene>
<name>ATG18_ASPFU</name>
<proteinExistence type="inferred from homology"/>
<reference key="1">
    <citation type="journal article" date="2005" name="Nature">
        <title>Genomic sequence of the pathogenic and allergenic filamentous fungus Aspergillus fumigatus.</title>
        <authorList>
            <person name="Nierman W.C."/>
            <person name="Pain A."/>
            <person name="Anderson M.J."/>
            <person name="Wortman J.R."/>
            <person name="Kim H.S."/>
            <person name="Arroyo J."/>
            <person name="Berriman M."/>
            <person name="Abe K."/>
            <person name="Archer D.B."/>
            <person name="Bermejo C."/>
            <person name="Bennett J.W."/>
            <person name="Bowyer P."/>
            <person name="Chen D."/>
            <person name="Collins M."/>
            <person name="Coulsen R."/>
            <person name="Davies R."/>
            <person name="Dyer P.S."/>
            <person name="Farman M.L."/>
            <person name="Fedorova N."/>
            <person name="Fedorova N.D."/>
            <person name="Feldblyum T.V."/>
            <person name="Fischer R."/>
            <person name="Fosker N."/>
            <person name="Fraser A."/>
            <person name="Garcia J.L."/>
            <person name="Garcia M.J."/>
            <person name="Goble A."/>
            <person name="Goldman G.H."/>
            <person name="Gomi K."/>
            <person name="Griffith-Jones S."/>
            <person name="Gwilliam R."/>
            <person name="Haas B.J."/>
            <person name="Haas H."/>
            <person name="Harris D.E."/>
            <person name="Horiuchi H."/>
            <person name="Huang J."/>
            <person name="Humphray S."/>
            <person name="Jimenez J."/>
            <person name="Keller N."/>
            <person name="Khouri H."/>
            <person name="Kitamoto K."/>
            <person name="Kobayashi T."/>
            <person name="Konzack S."/>
            <person name="Kulkarni R."/>
            <person name="Kumagai T."/>
            <person name="Lafton A."/>
            <person name="Latge J.-P."/>
            <person name="Li W."/>
            <person name="Lord A."/>
            <person name="Lu C."/>
            <person name="Majoros W.H."/>
            <person name="May G.S."/>
            <person name="Miller B.L."/>
            <person name="Mohamoud Y."/>
            <person name="Molina M."/>
            <person name="Monod M."/>
            <person name="Mouyna I."/>
            <person name="Mulligan S."/>
            <person name="Murphy L.D."/>
            <person name="O'Neil S."/>
            <person name="Paulsen I."/>
            <person name="Penalva M.A."/>
            <person name="Pertea M."/>
            <person name="Price C."/>
            <person name="Pritchard B.L."/>
            <person name="Quail M.A."/>
            <person name="Rabbinowitsch E."/>
            <person name="Rawlins N."/>
            <person name="Rajandream M.A."/>
            <person name="Reichard U."/>
            <person name="Renauld H."/>
            <person name="Robson G.D."/>
            <person name="Rodriguez de Cordoba S."/>
            <person name="Rodriguez-Pena J.M."/>
            <person name="Ronning C.M."/>
            <person name="Rutter S."/>
            <person name="Salzberg S.L."/>
            <person name="Sanchez M."/>
            <person name="Sanchez-Ferrero J.C."/>
            <person name="Saunders D."/>
            <person name="Seeger K."/>
            <person name="Squares R."/>
            <person name="Squares S."/>
            <person name="Takeuchi M."/>
            <person name="Tekaia F."/>
            <person name="Turner G."/>
            <person name="Vazquez de Aldana C.R."/>
            <person name="Weidman J."/>
            <person name="White O."/>
            <person name="Woodward J.R."/>
            <person name="Yu J.-H."/>
            <person name="Fraser C.M."/>
            <person name="Galagan J.E."/>
            <person name="Asai K."/>
            <person name="Machida M."/>
            <person name="Hall N."/>
            <person name="Barrell B.G."/>
            <person name="Denning D.W."/>
        </authorList>
    </citation>
    <scope>NUCLEOTIDE SEQUENCE [LARGE SCALE GENOMIC DNA]</scope>
    <source>
        <strain>ATCC MYA-4609 / CBS 101355 / FGSC A1100 / Af293</strain>
    </source>
</reference>
<keyword id="KW-0072">Autophagy</keyword>
<keyword id="KW-0967">Endosome</keyword>
<keyword id="KW-0472">Membrane</keyword>
<keyword id="KW-0653">Protein transport</keyword>
<keyword id="KW-1185">Reference proteome</keyword>
<keyword id="KW-0677">Repeat</keyword>
<keyword id="KW-0813">Transport</keyword>
<keyword id="KW-0926">Vacuole</keyword>
<keyword id="KW-0853">WD repeat</keyword>
<sequence length="436" mass="47359">MAMNFVTFNQDYSYLAVGSVSPPSATSKGFRIFTTDPFAKSYETKEGNIAIIEMLFSTSLVALILSPRRLQITNTKRQSTICELTFPTTVLAVRLNRKRLVIVLEDQIYLYDIQTMKLLYTIQTSPNPNAICALSPSSDNCYLAYPLPQKAPPSSFNPPSHTPPGTTHVSPTSGEVLIFDTLKLEAINVIEAHRSPLACITLNSDGTLLATASDKGTIIRVFSVPDGHKLYQFRRGSMPSRIFSMSFNTTSTLLCVSSSTETIHLFKLSHPTSSPDTSPSSPVGRDRSLSQSSSGYSPDRGDLTGDVGSSDFPARKHNGTLMGMIRRTSQNVGSTVAAKVGGYLPKGVSEMWEPTRDFAWFKLPKPSQTSGGSGNNGPLRSVVAMSSNTPQVMVVTSDGNFYVFSIDLSKGGEGTLTKQYSVLESNDRLGYSVTDY</sequence>
<feature type="chain" id="PRO_0000050861" description="Autophagy-related protein 18">
    <location>
        <begin position="1"/>
        <end position="436"/>
    </location>
</feature>
<feature type="repeat" description="WD 1">
    <location>
        <begin position="192"/>
        <end position="232"/>
    </location>
</feature>
<feature type="repeat" description="WD 2">
    <location>
        <begin position="237"/>
        <end position="276"/>
    </location>
</feature>
<feature type="repeat" description="WD 3">
    <location>
        <begin position="374"/>
        <end position="414"/>
    </location>
</feature>
<feature type="region of interest" description="Disordered" evidence="3">
    <location>
        <begin position="268"/>
        <end position="315"/>
    </location>
</feature>
<feature type="short sequence motif" description="L/FRRG motif" evidence="2">
    <location>
        <begin position="233"/>
        <end position="237"/>
    </location>
</feature>
<feature type="compositionally biased region" description="Low complexity" evidence="3">
    <location>
        <begin position="269"/>
        <end position="282"/>
    </location>
</feature>
<evidence type="ECO:0000250" key="1"/>
<evidence type="ECO:0000250" key="2">
    <source>
        <dbReference type="UniProtKB" id="P43601"/>
    </source>
</evidence>
<evidence type="ECO:0000256" key="3">
    <source>
        <dbReference type="SAM" id="MobiDB-lite"/>
    </source>
</evidence>
<evidence type="ECO:0000305" key="4"/>
<comment type="function">
    <text evidence="1">The PI(3,5)P2 regulatory complex regulates both the synthesis and turnover of phosphatidylinositol 3,5-bisphosphate (PtdIns(3,5)P2). Necessary for proper vacuole morphology. Plays an important role in osmotically-induced vacuole fragmentation. Required for cytoplasm to vacuole transport (Cvt) vesicle formation, pexophagy and starvation-induced autophagy. Involved in correct atg9 trafficking to the pre-autophagosomal structure. Might also be involved in premeiotic DNA replication (By similarity).</text>
</comment>
<comment type="subunit">
    <text evidence="1">Component of the PI(3,5)P2 regulatory complex.</text>
</comment>
<comment type="subcellular location">
    <subcellularLocation>
        <location evidence="1">Preautophagosomal structure membrane</location>
        <topology evidence="1">Peripheral membrane protein</topology>
    </subcellularLocation>
    <subcellularLocation>
        <location evidence="1">Vacuole membrane</location>
        <topology evidence="1">Peripheral membrane protein</topology>
    </subcellularLocation>
    <subcellularLocation>
        <location evidence="1">Endosome membrane</location>
        <topology evidence="1">Peripheral membrane protein</topology>
    </subcellularLocation>
</comment>
<comment type="domain">
    <text evidence="1">The N-terminus might form a beta-propeller domain involved in specific binding to phosphatidylinositol 3,5-bisphosphate (PIP2), leading to the association of the protein to the membrane.</text>
</comment>
<comment type="domain">
    <text evidence="2">The L/FRRG motif is essential for the cytoplasm to vacuole transport (Cvt) pathway, for the recruitment of atg8 and atg16 to the PAS in nutrient-rich medium, and for its recruitment to and dissociation from the PAS under starvation conditions.</text>
</comment>
<comment type="similarity">
    <text evidence="4">Belongs to the WD repeat PROPPIN family.</text>
</comment>